<proteinExistence type="inferred from homology"/>
<evidence type="ECO:0000250" key="1">
    <source>
        <dbReference type="UniProtKB" id="Q13523"/>
    </source>
</evidence>
<evidence type="ECO:0000255" key="2">
    <source>
        <dbReference type="PROSITE-ProRule" id="PRU00159"/>
    </source>
</evidence>
<evidence type="ECO:0000255" key="3">
    <source>
        <dbReference type="PROSITE-ProRule" id="PRU10027"/>
    </source>
</evidence>
<evidence type="ECO:0000256" key="4">
    <source>
        <dbReference type="SAM" id="MobiDB-lite"/>
    </source>
</evidence>
<evidence type="ECO:0000305" key="5"/>
<keyword id="KW-0067">ATP-binding</keyword>
<keyword id="KW-0137">Centromere</keyword>
<keyword id="KW-0158">Chromosome</keyword>
<keyword id="KW-0418">Kinase</keyword>
<keyword id="KW-0995">Kinetochore</keyword>
<keyword id="KW-0547">Nucleotide-binding</keyword>
<keyword id="KW-0539">Nucleus</keyword>
<keyword id="KW-1185">Reference proteome</keyword>
<keyword id="KW-0723">Serine/threonine-protein kinase</keyword>
<keyword id="KW-0808">Transferase</keyword>
<dbReference type="EC" id="2.7.11.1"/>
<dbReference type="EMBL" id="AAFI02000032">
    <property type="protein sequence ID" value="EAL67626.1"/>
    <property type="molecule type" value="Genomic_DNA"/>
</dbReference>
<dbReference type="RefSeq" id="XP_641608.1">
    <property type="nucleotide sequence ID" value="XM_636516.1"/>
</dbReference>
<dbReference type="SMR" id="Q54WE5"/>
<dbReference type="STRING" id="44689.Q54WE5"/>
<dbReference type="PaxDb" id="44689-DDB0216281"/>
<dbReference type="EnsemblProtists" id="EAL67626">
    <property type="protein sequence ID" value="EAL67626"/>
    <property type="gene ID" value="DDB_G0279703"/>
</dbReference>
<dbReference type="GeneID" id="8622186"/>
<dbReference type="KEGG" id="ddi:DDB_G0279703"/>
<dbReference type="dictyBase" id="DDB_G0279703">
    <property type="gene designation" value="prpf4B"/>
</dbReference>
<dbReference type="VEuPathDB" id="AmoebaDB:DDB_G0279703"/>
<dbReference type="eggNOG" id="KOG0670">
    <property type="taxonomic scope" value="Eukaryota"/>
</dbReference>
<dbReference type="HOGENOM" id="CLU_000288_5_5_1"/>
<dbReference type="InParanoid" id="Q54WE5"/>
<dbReference type="OMA" id="MNRGDNA"/>
<dbReference type="PRO" id="PR:Q54WE5"/>
<dbReference type="Proteomes" id="UP000002195">
    <property type="component" value="Chromosome 3"/>
</dbReference>
<dbReference type="GO" id="GO:0000776">
    <property type="term" value="C:kinetochore"/>
    <property type="evidence" value="ECO:0000250"/>
    <property type="project" value="UniProtKB"/>
</dbReference>
<dbReference type="GO" id="GO:0016607">
    <property type="term" value="C:nuclear speck"/>
    <property type="evidence" value="ECO:0000250"/>
    <property type="project" value="UniProtKB"/>
</dbReference>
<dbReference type="GO" id="GO:0005524">
    <property type="term" value="F:ATP binding"/>
    <property type="evidence" value="ECO:0007669"/>
    <property type="project" value="UniProtKB-KW"/>
</dbReference>
<dbReference type="GO" id="GO:0106310">
    <property type="term" value="F:protein serine kinase activity"/>
    <property type="evidence" value="ECO:0007669"/>
    <property type="project" value="RHEA"/>
</dbReference>
<dbReference type="GO" id="GO:0004674">
    <property type="term" value="F:protein serine/threonine kinase activity"/>
    <property type="evidence" value="ECO:0000250"/>
    <property type="project" value="UniProtKB"/>
</dbReference>
<dbReference type="GO" id="GO:0045292">
    <property type="term" value="P:mRNA cis splicing, via spliceosome"/>
    <property type="evidence" value="ECO:0007669"/>
    <property type="project" value="InterPro"/>
</dbReference>
<dbReference type="GO" id="GO:0090266">
    <property type="term" value="P:regulation of mitotic cell cycle spindle assembly checkpoint"/>
    <property type="evidence" value="ECO:0000250"/>
    <property type="project" value="UniProtKB"/>
</dbReference>
<dbReference type="GO" id="GO:0000387">
    <property type="term" value="P:spliceosomal snRNP assembly"/>
    <property type="evidence" value="ECO:0000250"/>
    <property type="project" value="UniProtKB"/>
</dbReference>
<dbReference type="GO" id="GO:0000244">
    <property type="term" value="P:spliceosomal tri-snRNP complex assembly"/>
    <property type="evidence" value="ECO:0000250"/>
    <property type="project" value="UniProtKB"/>
</dbReference>
<dbReference type="CDD" id="cd14135">
    <property type="entry name" value="STKc_PRP4"/>
    <property type="match status" value="1"/>
</dbReference>
<dbReference type="FunFam" id="3.30.200.20:FF:000440">
    <property type="entry name" value="CMGC/DYRK/PRP4 protein kinase, variant"/>
    <property type="match status" value="1"/>
</dbReference>
<dbReference type="FunFam" id="1.10.510.10:FF:000078">
    <property type="entry name" value="Serine/threonine-protein kinase PRP4 homolog"/>
    <property type="match status" value="1"/>
</dbReference>
<dbReference type="Gene3D" id="3.30.200.20">
    <property type="entry name" value="Phosphorylase Kinase, domain 1"/>
    <property type="match status" value="1"/>
</dbReference>
<dbReference type="Gene3D" id="1.10.510.10">
    <property type="entry name" value="Transferase(Phosphotransferase) domain 1"/>
    <property type="match status" value="1"/>
</dbReference>
<dbReference type="InterPro" id="IPR011009">
    <property type="entry name" value="Kinase-like_dom_sf"/>
</dbReference>
<dbReference type="InterPro" id="IPR000719">
    <property type="entry name" value="Prot_kinase_dom"/>
</dbReference>
<dbReference type="InterPro" id="IPR017441">
    <property type="entry name" value="Protein_kinase_ATP_BS"/>
</dbReference>
<dbReference type="InterPro" id="IPR008271">
    <property type="entry name" value="Ser/Thr_kinase_AS"/>
</dbReference>
<dbReference type="InterPro" id="IPR050494">
    <property type="entry name" value="Ser_Thr_dual-spec_kinase"/>
</dbReference>
<dbReference type="InterPro" id="IPR044092">
    <property type="entry name" value="STKc_PRP4"/>
</dbReference>
<dbReference type="PANTHER" id="PTHR24058">
    <property type="entry name" value="DUAL SPECIFICITY PROTEIN KINASE"/>
    <property type="match status" value="1"/>
</dbReference>
<dbReference type="PANTHER" id="PTHR24058:SF103">
    <property type="entry name" value="SERINE_THREONINE-PROTEIN KINASE PRP4 HOMOLOG"/>
    <property type="match status" value="1"/>
</dbReference>
<dbReference type="Pfam" id="PF00069">
    <property type="entry name" value="Pkinase"/>
    <property type="match status" value="1"/>
</dbReference>
<dbReference type="SMART" id="SM00220">
    <property type="entry name" value="S_TKc"/>
    <property type="match status" value="1"/>
</dbReference>
<dbReference type="SUPFAM" id="SSF56112">
    <property type="entry name" value="Protein kinase-like (PK-like)"/>
    <property type="match status" value="1"/>
</dbReference>
<dbReference type="PROSITE" id="PS00107">
    <property type="entry name" value="PROTEIN_KINASE_ATP"/>
    <property type="match status" value="1"/>
</dbReference>
<dbReference type="PROSITE" id="PS50011">
    <property type="entry name" value="PROTEIN_KINASE_DOM"/>
    <property type="match status" value="1"/>
</dbReference>
<dbReference type="PROSITE" id="PS00108">
    <property type="entry name" value="PROTEIN_KINASE_ST"/>
    <property type="match status" value="1"/>
</dbReference>
<sequence>MVIESEINDKKRGLESSSPTINDPKKVKVESPSSGKEDGEVDEVTSSPASRETSSSKLMSPSKNQSSSSSRSYHDSNNGYRRKDERYSSSRSYDRNYRDRDISRDGDRERDRDRERDRDRDRDRDRDRDRDRDRERDRDRDRDRDRDRDRDRDRDRERERERDRDRNSQERGSRNSHERDYRDNRDYSRDSRDNMDSRDNKNGSRQSINNNTLSYEKQADRKDEVRVKDNISVNDDKTNHGENLTNESITATSTNEPTKPAVIIEEDEETKTKRILEENRLQRQLIMEKYNKEQPQPITSSLSTTEKEQSNTNTNSNSTPVATTTTSILAKSPSNLENQIEEEDESIIIEWRKDQNSENSSAFNDNNNDESCSSEEDLKKRGKIKEEDIKAKDKPITTTTTTTTINNVSIKLPPKPEPIKAKTSAPVFDMFSDSPSDETDESNRDLNETNGGGVMVDANIVVNPSINLSDNWDDADGYYKFRVGEIMDKYQIFSPIGSGVFSTVVSAKETKTNEDVVIKIIRNRPSMHRSGLKEIEILQKISNTPTSSNQKSHCIQMKDHFNYRNHLCIVFEPMSMSLHQLIKKYGKDIGLSLNAVRVYAKQLFLALKHIKNSKILHADIKPDNIVVNEAKNTIKIVDFGSAGEIHESEITPYLVSRFYRAPEIILGHKYDYSIDVWSVGCCLAEFFTGKFLFPGKTNNDMIRLFMEYRGAFSKKMLKKSEFVSNHFNENLVFMKQEIDNIEKTVRKVPHDITKPTKDILQFLLPKNVSIPDQDMKKLIQLKDLIEKCTILDPEKRITPFEALNHEFLKPF</sequence>
<name>PRP4K_DICDI</name>
<accession>Q54WE5</accession>
<feature type="chain" id="PRO_0000355207" description="Serine/threonine-protein kinase prpf4B">
    <location>
        <begin position="1"/>
        <end position="811"/>
    </location>
</feature>
<feature type="domain" description="Protein kinase" evidence="2">
    <location>
        <begin position="490"/>
        <end position="808"/>
    </location>
</feature>
<feature type="region of interest" description="Disordered" evidence="4">
    <location>
        <begin position="1"/>
        <end position="257"/>
    </location>
</feature>
<feature type="region of interest" description="Disordered" evidence="4">
    <location>
        <begin position="288"/>
        <end position="341"/>
    </location>
</feature>
<feature type="region of interest" description="Disordered" evidence="4">
    <location>
        <begin position="353"/>
        <end position="379"/>
    </location>
</feature>
<feature type="region of interest" description="Disordered" evidence="4">
    <location>
        <begin position="408"/>
        <end position="452"/>
    </location>
</feature>
<feature type="compositionally biased region" description="Low complexity" evidence="4">
    <location>
        <begin position="46"/>
        <end position="71"/>
    </location>
</feature>
<feature type="compositionally biased region" description="Basic and acidic residues" evidence="4">
    <location>
        <begin position="81"/>
        <end position="202"/>
    </location>
</feature>
<feature type="compositionally biased region" description="Polar residues" evidence="4">
    <location>
        <begin position="203"/>
        <end position="215"/>
    </location>
</feature>
<feature type="compositionally biased region" description="Basic and acidic residues" evidence="4">
    <location>
        <begin position="217"/>
        <end position="240"/>
    </location>
</feature>
<feature type="compositionally biased region" description="Polar residues" evidence="4">
    <location>
        <begin position="241"/>
        <end position="257"/>
    </location>
</feature>
<feature type="compositionally biased region" description="Polar residues" evidence="4">
    <location>
        <begin position="293"/>
        <end position="302"/>
    </location>
</feature>
<feature type="compositionally biased region" description="Low complexity" evidence="4">
    <location>
        <begin position="310"/>
        <end position="327"/>
    </location>
</feature>
<feature type="active site" description="Proton acceptor" evidence="2 3">
    <location>
        <position position="619"/>
    </location>
</feature>
<feature type="binding site" evidence="2">
    <location>
        <begin position="496"/>
        <end position="504"/>
    </location>
    <ligand>
        <name>ATP</name>
        <dbReference type="ChEBI" id="CHEBI:30616"/>
    </ligand>
</feature>
<feature type="binding site" evidence="2">
    <location>
        <position position="519"/>
    </location>
    <ligand>
        <name>ATP</name>
        <dbReference type="ChEBI" id="CHEBI:30616"/>
    </ligand>
</feature>
<gene>
    <name type="primary">prp4k</name>
    <name type="synonym">prpf4B</name>
    <name type="ORF">DDB_G0279703</name>
</gene>
<protein>
    <recommendedName>
        <fullName>Serine/threonine-protein kinase prpf4B</fullName>
        <ecNumber>2.7.11.1</ecNumber>
    </recommendedName>
    <alternativeName>
        <fullName>PRP4 kinase</fullName>
    </alternativeName>
    <alternativeName>
        <fullName>PRP4 pre-mRNA-processing factor 4 homolog B</fullName>
    </alternativeName>
</protein>
<organism>
    <name type="scientific">Dictyostelium discoideum</name>
    <name type="common">Social amoeba</name>
    <dbReference type="NCBI Taxonomy" id="44689"/>
    <lineage>
        <taxon>Eukaryota</taxon>
        <taxon>Amoebozoa</taxon>
        <taxon>Evosea</taxon>
        <taxon>Eumycetozoa</taxon>
        <taxon>Dictyostelia</taxon>
        <taxon>Dictyosteliales</taxon>
        <taxon>Dictyosteliaceae</taxon>
        <taxon>Dictyostelium</taxon>
    </lineage>
</organism>
<comment type="function">
    <text evidence="1">Serine/threonine kinase involved in spliceosomal assembly as well as mitosis and signaling regulation.</text>
</comment>
<comment type="catalytic activity">
    <reaction evidence="1">
        <text>L-seryl-[protein] + ATP = O-phospho-L-seryl-[protein] + ADP + H(+)</text>
        <dbReference type="Rhea" id="RHEA:17989"/>
        <dbReference type="Rhea" id="RHEA-COMP:9863"/>
        <dbReference type="Rhea" id="RHEA-COMP:11604"/>
        <dbReference type="ChEBI" id="CHEBI:15378"/>
        <dbReference type="ChEBI" id="CHEBI:29999"/>
        <dbReference type="ChEBI" id="CHEBI:30616"/>
        <dbReference type="ChEBI" id="CHEBI:83421"/>
        <dbReference type="ChEBI" id="CHEBI:456216"/>
        <dbReference type="EC" id="2.7.11.1"/>
    </reaction>
    <physiologicalReaction direction="left-to-right" evidence="1">
        <dbReference type="Rhea" id="RHEA:17990"/>
    </physiologicalReaction>
</comment>
<comment type="catalytic activity">
    <reaction evidence="1">
        <text>L-threonyl-[protein] + ATP = O-phospho-L-threonyl-[protein] + ADP + H(+)</text>
        <dbReference type="Rhea" id="RHEA:46608"/>
        <dbReference type="Rhea" id="RHEA-COMP:11060"/>
        <dbReference type="Rhea" id="RHEA-COMP:11605"/>
        <dbReference type="ChEBI" id="CHEBI:15378"/>
        <dbReference type="ChEBI" id="CHEBI:30013"/>
        <dbReference type="ChEBI" id="CHEBI:30616"/>
        <dbReference type="ChEBI" id="CHEBI:61977"/>
        <dbReference type="ChEBI" id="CHEBI:456216"/>
        <dbReference type="EC" id="2.7.11.1"/>
    </reaction>
    <physiologicalReaction direction="left-to-right" evidence="1">
        <dbReference type="Rhea" id="RHEA:46609"/>
    </physiologicalReaction>
</comment>
<comment type="subcellular location">
    <subcellularLocation>
        <location evidence="1">Nucleus</location>
    </subcellularLocation>
    <subcellularLocation>
        <location evidence="1">Chromosome</location>
        <location evidence="1">Centromere</location>
        <location evidence="1">Kinetochore</location>
    </subcellularLocation>
    <text evidence="1">Located throughout the nucleus, excluding the nucleolus but enriched in multiple speckles.</text>
</comment>
<comment type="PTM">
    <text evidence="1">Phosphorylated. Autophosphorylated; phosphorylation inhibits interaction with its targets.</text>
</comment>
<comment type="similarity">
    <text evidence="5">Belongs to the protein kinase superfamily. CMGC Ser/Thr protein kinase family.</text>
</comment>
<reference key="1">
    <citation type="journal article" date="2005" name="Nature">
        <title>The genome of the social amoeba Dictyostelium discoideum.</title>
        <authorList>
            <person name="Eichinger L."/>
            <person name="Pachebat J.A."/>
            <person name="Gloeckner G."/>
            <person name="Rajandream M.A."/>
            <person name="Sucgang R."/>
            <person name="Berriman M."/>
            <person name="Song J."/>
            <person name="Olsen R."/>
            <person name="Szafranski K."/>
            <person name="Xu Q."/>
            <person name="Tunggal B."/>
            <person name="Kummerfeld S."/>
            <person name="Madera M."/>
            <person name="Konfortov B.A."/>
            <person name="Rivero F."/>
            <person name="Bankier A.T."/>
            <person name="Lehmann R."/>
            <person name="Hamlin N."/>
            <person name="Davies R."/>
            <person name="Gaudet P."/>
            <person name="Fey P."/>
            <person name="Pilcher K."/>
            <person name="Chen G."/>
            <person name="Saunders D."/>
            <person name="Sodergren E.J."/>
            <person name="Davis P."/>
            <person name="Kerhornou A."/>
            <person name="Nie X."/>
            <person name="Hall N."/>
            <person name="Anjard C."/>
            <person name="Hemphill L."/>
            <person name="Bason N."/>
            <person name="Farbrother P."/>
            <person name="Desany B."/>
            <person name="Just E."/>
            <person name="Morio T."/>
            <person name="Rost R."/>
            <person name="Churcher C.M."/>
            <person name="Cooper J."/>
            <person name="Haydock S."/>
            <person name="van Driessche N."/>
            <person name="Cronin A."/>
            <person name="Goodhead I."/>
            <person name="Muzny D.M."/>
            <person name="Mourier T."/>
            <person name="Pain A."/>
            <person name="Lu M."/>
            <person name="Harper D."/>
            <person name="Lindsay R."/>
            <person name="Hauser H."/>
            <person name="James K.D."/>
            <person name="Quiles M."/>
            <person name="Madan Babu M."/>
            <person name="Saito T."/>
            <person name="Buchrieser C."/>
            <person name="Wardroper A."/>
            <person name="Felder M."/>
            <person name="Thangavelu M."/>
            <person name="Johnson D."/>
            <person name="Knights A."/>
            <person name="Loulseged H."/>
            <person name="Mungall K.L."/>
            <person name="Oliver K."/>
            <person name="Price C."/>
            <person name="Quail M.A."/>
            <person name="Urushihara H."/>
            <person name="Hernandez J."/>
            <person name="Rabbinowitsch E."/>
            <person name="Steffen D."/>
            <person name="Sanders M."/>
            <person name="Ma J."/>
            <person name="Kohara Y."/>
            <person name="Sharp S."/>
            <person name="Simmonds M.N."/>
            <person name="Spiegler S."/>
            <person name="Tivey A."/>
            <person name="Sugano S."/>
            <person name="White B."/>
            <person name="Walker D."/>
            <person name="Woodward J.R."/>
            <person name="Winckler T."/>
            <person name="Tanaka Y."/>
            <person name="Shaulsky G."/>
            <person name="Schleicher M."/>
            <person name="Weinstock G.M."/>
            <person name="Rosenthal A."/>
            <person name="Cox E.C."/>
            <person name="Chisholm R.L."/>
            <person name="Gibbs R.A."/>
            <person name="Loomis W.F."/>
            <person name="Platzer M."/>
            <person name="Kay R.R."/>
            <person name="Williams J.G."/>
            <person name="Dear P.H."/>
            <person name="Noegel A.A."/>
            <person name="Barrell B.G."/>
            <person name="Kuspa A."/>
        </authorList>
    </citation>
    <scope>NUCLEOTIDE SEQUENCE [LARGE SCALE GENOMIC DNA]</scope>
    <source>
        <strain>AX4</strain>
    </source>
</reference>